<proteinExistence type="predicted"/>
<dbReference type="EMBL" id="M11653">
    <property type="protein sequence ID" value="AAA24870.1"/>
    <property type="molecule type" value="Genomic_DNA"/>
</dbReference>
<dbReference type="RefSeq" id="WP_071526333.1">
    <property type="nucleotide sequence ID" value="NZ_UFYK01000001.1"/>
</dbReference>
<dbReference type="GeneID" id="93122545"/>
<dbReference type="GO" id="GO:0008652">
    <property type="term" value="P:amino acid biosynthetic process"/>
    <property type="evidence" value="ECO:0007669"/>
    <property type="project" value="UniProtKB-KW"/>
</dbReference>
<dbReference type="GO" id="GO:0009082">
    <property type="term" value="P:branched-chain amino acid biosynthetic process"/>
    <property type="evidence" value="ECO:0007669"/>
    <property type="project" value="UniProtKB-KW"/>
</dbReference>
<dbReference type="InterPro" id="IPR012567">
    <property type="entry name" value="IlvGEDA_leader"/>
</dbReference>
<dbReference type="NCBIfam" id="NF007744">
    <property type="entry name" value="PRK10424.1"/>
    <property type="match status" value="1"/>
</dbReference>
<dbReference type="Pfam" id="PF08046">
    <property type="entry name" value="IlvGEDA_leader"/>
    <property type="match status" value="1"/>
</dbReference>
<sequence>MSLLVQVISLVVISVVVIIIPPCGAALGRIKA</sequence>
<reference key="1">
    <citation type="journal article" date="1985" name="J. Bacteriol.">
        <title>Comparison of the regulatory regions of ilvGEDA operons from several enteric organisms.</title>
        <authorList>
            <person name="Harms E."/>
            <person name="Hsu J.-H."/>
            <person name="Subrahmanyam C.S."/>
            <person name="Umbarger H.E."/>
        </authorList>
    </citation>
    <scope>NUCLEOTIDE SEQUENCE [GENOMIC DNA]</scope>
</reference>
<reference key="2">
    <citation type="submission" date="1986-04" db="EMBL/GenBank/DDBJ databases">
        <authorList>
            <person name="Umbarger H.E."/>
        </authorList>
    </citation>
    <scope>SEQUENCE REVISION</scope>
</reference>
<protein>
    <recommendedName>
        <fullName>ilv operon leader peptide</fullName>
    </recommendedName>
    <alternativeName>
        <fullName>ilvGMEDA operon attenuator peptide</fullName>
    </alternativeName>
</protein>
<gene>
    <name type="primary">ilvL</name>
</gene>
<feature type="peptide" id="PRO_0000044754" description="ilv operon leader peptide">
    <location>
        <begin position="1"/>
        <end position="32"/>
    </location>
</feature>
<name>LPID_EDWTA</name>
<accession>P08140</accession>
<keyword id="KW-0028">Amino-acid biosynthesis</keyword>
<keyword id="KW-0100">Branched-chain amino acid biosynthesis</keyword>
<keyword id="KW-0428">Leader peptide</keyword>
<organism>
    <name type="scientific">Edwardsiella tarda</name>
    <dbReference type="NCBI Taxonomy" id="636"/>
    <lineage>
        <taxon>Bacteria</taxon>
        <taxon>Pseudomonadati</taxon>
        <taxon>Pseudomonadota</taxon>
        <taxon>Gammaproteobacteria</taxon>
        <taxon>Enterobacterales</taxon>
        <taxon>Hafniaceae</taxon>
        <taxon>Edwardsiella</taxon>
    </lineage>
</organism>